<feature type="chain" id="PRO_0000301033" description="Peptide deformylase">
    <location>
        <begin position="1"/>
        <end position="194"/>
    </location>
</feature>
<feature type="active site" evidence="1">
    <location>
        <position position="148"/>
    </location>
</feature>
<feature type="binding site" evidence="1">
    <location>
        <position position="105"/>
    </location>
    <ligand>
        <name>Fe cation</name>
        <dbReference type="ChEBI" id="CHEBI:24875"/>
    </ligand>
</feature>
<feature type="binding site" evidence="1">
    <location>
        <position position="147"/>
    </location>
    <ligand>
        <name>Fe cation</name>
        <dbReference type="ChEBI" id="CHEBI:24875"/>
    </ligand>
</feature>
<feature type="binding site" evidence="1">
    <location>
        <position position="151"/>
    </location>
    <ligand>
        <name>Fe cation</name>
        <dbReference type="ChEBI" id="CHEBI:24875"/>
    </ligand>
</feature>
<proteinExistence type="inferred from homology"/>
<gene>
    <name evidence="1" type="primary">def</name>
    <name type="ordered locus">FP1753</name>
</gene>
<name>DEF_FLAPJ</name>
<comment type="function">
    <text evidence="1">Removes the formyl group from the N-terminal Met of newly synthesized proteins. Requires at least a dipeptide for an efficient rate of reaction. N-terminal L-methionine is a prerequisite for activity but the enzyme has broad specificity at other positions.</text>
</comment>
<comment type="catalytic activity">
    <reaction evidence="1">
        <text>N-terminal N-formyl-L-methionyl-[peptide] + H2O = N-terminal L-methionyl-[peptide] + formate</text>
        <dbReference type="Rhea" id="RHEA:24420"/>
        <dbReference type="Rhea" id="RHEA-COMP:10639"/>
        <dbReference type="Rhea" id="RHEA-COMP:10640"/>
        <dbReference type="ChEBI" id="CHEBI:15377"/>
        <dbReference type="ChEBI" id="CHEBI:15740"/>
        <dbReference type="ChEBI" id="CHEBI:49298"/>
        <dbReference type="ChEBI" id="CHEBI:64731"/>
        <dbReference type="EC" id="3.5.1.88"/>
    </reaction>
</comment>
<comment type="cofactor">
    <cofactor evidence="1">
        <name>Fe(2+)</name>
        <dbReference type="ChEBI" id="CHEBI:29033"/>
    </cofactor>
    <text evidence="1">Binds 1 Fe(2+) ion.</text>
</comment>
<comment type="similarity">
    <text evidence="1">Belongs to the polypeptide deformylase family.</text>
</comment>
<dbReference type="EC" id="3.5.1.88" evidence="1"/>
<dbReference type="EMBL" id="AM398681">
    <property type="protein sequence ID" value="CAL43820.1"/>
    <property type="molecule type" value="Genomic_DNA"/>
</dbReference>
<dbReference type="RefSeq" id="WP_011963863.1">
    <property type="nucleotide sequence ID" value="NC_009613.3"/>
</dbReference>
<dbReference type="RefSeq" id="YP_001296627.1">
    <property type="nucleotide sequence ID" value="NC_009613.3"/>
</dbReference>
<dbReference type="SMR" id="A6H0E7"/>
<dbReference type="STRING" id="402612.FP1753"/>
<dbReference type="EnsemblBacteria" id="CAL43820">
    <property type="protein sequence ID" value="CAL43820"/>
    <property type="gene ID" value="FP1753"/>
</dbReference>
<dbReference type="GeneID" id="66552060"/>
<dbReference type="KEGG" id="fps:FP1753"/>
<dbReference type="PATRIC" id="fig|402612.5.peg.1772"/>
<dbReference type="eggNOG" id="COG0242">
    <property type="taxonomic scope" value="Bacteria"/>
</dbReference>
<dbReference type="HOGENOM" id="CLU_061901_2_0_10"/>
<dbReference type="OrthoDB" id="9784988at2"/>
<dbReference type="Proteomes" id="UP000006394">
    <property type="component" value="Chromosome"/>
</dbReference>
<dbReference type="GO" id="GO:0046872">
    <property type="term" value="F:metal ion binding"/>
    <property type="evidence" value="ECO:0007669"/>
    <property type="project" value="UniProtKB-KW"/>
</dbReference>
<dbReference type="GO" id="GO:0042586">
    <property type="term" value="F:peptide deformylase activity"/>
    <property type="evidence" value="ECO:0007669"/>
    <property type="project" value="UniProtKB-UniRule"/>
</dbReference>
<dbReference type="GO" id="GO:0043686">
    <property type="term" value="P:co-translational protein modification"/>
    <property type="evidence" value="ECO:0007669"/>
    <property type="project" value="TreeGrafter"/>
</dbReference>
<dbReference type="GO" id="GO:0006412">
    <property type="term" value="P:translation"/>
    <property type="evidence" value="ECO:0007669"/>
    <property type="project" value="UniProtKB-UniRule"/>
</dbReference>
<dbReference type="CDD" id="cd00487">
    <property type="entry name" value="Pep_deformylase"/>
    <property type="match status" value="1"/>
</dbReference>
<dbReference type="Gene3D" id="3.90.45.10">
    <property type="entry name" value="Peptide deformylase"/>
    <property type="match status" value="1"/>
</dbReference>
<dbReference type="HAMAP" id="MF_00163">
    <property type="entry name" value="Pep_deformylase"/>
    <property type="match status" value="1"/>
</dbReference>
<dbReference type="InterPro" id="IPR023635">
    <property type="entry name" value="Peptide_deformylase"/>
</dbReference>
<dbReference type="InterPro" id="IPR036821">
    <property type="entry name" value="Peptide_deformylase_sf"/>
</dbReference>
<dbReference type="NCBIfam" id="TIGR00079">
    <property type="entry name" value="pept_deformyl"/>
    <property type="match status" value="1"/>
</dbReference>
<dbReference type="NCBIfam" id="NF001159">
    <property type="entry name" value="PRK00150.1-3"/>
    <property type="match status" value="1"/>
</dbReference>
<dbReference type="PANTHER" id="PTHR10458">
    <property type="entry name" value="PEPTIDE DEFORMYLASE"/>
    <property type="match status" value="1"/>
</dbReference>
<dbReference type="PANTHER" id="PTHR10458:SF22">
    <property type="entry name" value="PEPTIDE DEFORMYLASE"/>
    <property type="match status" value="1"/>
</dbReference>
<dbReference type="Pfam" id="PF01327">
    <property type="entry name" value="Pep_deformylase"/>
    <property type="match status" value="1"/>
</dbReference>
<dbReference type="PIRSF" id="PIRSF004749">
    <property type="entry name" value="Pep_def"/>
    <property type="match status" value="1"/>
</dbReference>
<dbReference type="PRINTS" id="PR01576">
    <property type="entry name" value="PDEFORMYLASE"/>
</dbReference>
<dbReference type="SUPFAM" id="SSF56420">
    <property type="entry name" value="Peptide deformylase"/>
    <property type="match status" value="1"/>
</dbReference>
<keyword id="KW-0378">Hydrolase</keyword>
<keyword id="KW-0408">Iron</keyword>
<keyword id="KW-0479">Metal-binding</keyword>
<keyword id="KW-0648">Protein biosynthesis</keyword>
<keyword id="KW-1185">Reference proteome</keyword>
<sequence>MILPIVGYGDPVLRKVCEEITKDYINLEETIANMYETMYNACGVGLAAPQVGLPIRLFIVDADPFSDSDDISKEEAAALKGFKKTFINAKMLKEEGEEWSFSEGCLSIPDVREDVYRNPNITIEYYDENFNKKTEEYNGLIARVIQHEYDHIEGVLFTDKITVFKKQFIKKKLQNIMEGKARPDYRMKLVPKKR</sequence>
<evidence type="ECO:0000255" key="1">
    <source>
        <dbReference type="HAMAP-Rule" id="MF_00163"/>
    </source>
</evidence>
<reference key="1">
    <citation type="journal article" date="2007" name="Nat. Biotechnol.">
        <title>Complete genome sequence of the fish pathogen Flavobacterium psychrophilum.</title>
        <authorList>
            <person name="Duchaud E."/>
            <person name="Boussaha M."/>
            <person name="Loux V."/>
            <person name="Bernardet J.-F."/>
            <person name="Michel C."/>
            <person name="Kerouault B."/>
            <person name="Mondot S."/>
            <person name="Nicolas P."/>
            <person name="Bossy R."/>
            <person name="Caron C."/>
            <person name="Bessieres P."/>
            <person name="Gibrat J.-F."/>
            <person name="Claverol S."/>
            <person name="Dumetz F."/>
            <person name="Le Henaff M."/>
            <person name="Benmansour A."/>
        </authorList>
    </citation>
    <scope>NUCLEOTIDE SEQUENCE [LARGE SCALE GENOMIC DNA]</scope>
    <source>
        <strain>ATCC 49511 / DSM 21280 / CIP 103535 / JIP02/86</strain>
    </source>
</reference>
<organism>
    <name type="scientific">Flavobacterium psychrophilum (strain ATCC 49511 / DSM 21280 / CIP 103535 / JIP02/86)</name>
    <dbReference type="NCBI Taxonomy" id="402612"/>
    <lineage>
        <taxon>Bacteria</taxon>
        <taxon>Pseudomonadati</taxon>
        <taxon>Bacteroidota</taxon>
        <taxon>Flavobacteriia</taxon>
        <taxon>Flavobacteriales</taxon>
        <taxon>Flavobacteriaceae</taxon>
        <taxon>Flavobacterium</taxon>
    </lineage>
</organism>
<accession>A6H0E7</accession>
<protein>
    <recommendedName>
        <fullName evidence="1">Peptide deformylase</fullName>
        <shortName evidence="1">PDF</shortName>
        <ecNumber evidence="1">3.5.1.88</ecNumber>
    </recommendedName>
    <alternativeName>
        <fullName evidence="1">Polypeptide deformylase</fullName>
    </alternativeName>
</protein>